<evidence type="ECO:0000255" key="1">
    <source>
        <dbReference type="HAMAP-Rule" id="MF_00195"/>
    </source>
</evidence>
<gene>
    <name evidence="1" type="primary">der</name>
    <name type="synonym">engA</name>
    <name type="ordered locus">SH1436</name>
</gene>
<sequence>MTKPIVAIVGRPNVGKSTIFNRVVGERVSIVEDTPGVTRDRIYSSGEWLTHEFNIIDTGGIEIGDAPFQTQIRAQAEIAIDEADVIIFMVNVREGLTQSDEMVAQMLYKSKKPVVLAVNKVDNPEMRNDIFDFYSLGFGDPYPISGSHGLGLGDLLDEVVKHFDEETEDSYDEDTIRLSIIGRPNVGKSSLVNAILGEDRVIVSNVAGTTRDAVDTEYSYDGQDYVLIDTAGMRKKGKVYESTEKYSVLRALKAIERSNVVLIVIDAEEGIIEQDKRVAGYAHEEGKAVVIVVNKWDTVDKDSNTMKKFADDVRNQFQFLDYAQIAFVSAKEGTRLRTLFPYINEASENHKKRVQSSTLNEVVTDAISMNPTPTDKGRRLNVFYTTQVANEPPTFVVFVNDVELMHFSYKRYLENQIRHAFGFEGTPIHIIPRRRN</sequence>
<dbReference type="EMBL" id="AP006716">
    <property type="protein sequence ID" value="BAE04745.1"/>
    <property type="molecule type" value="Genomic_DNA"/>
</dbReference>
<dbReference type="RefSeq" id="WP_011275731.1">
    <property type="nucleotide sequence ID" value="NC_007168.1"/>
</dbReference>
<dbReference type="SMR" id="Q4L6I0"/>
<dbReference type="GeneID" id="93780833"/>
<dbReference type="KEGG" id="sha:SH1436"/>
<dbReference type="eggNOG" id="COG1160">
    <property type="taxonomic scope" value="Bacteria"/>
</dbReference>
<dbReference type="HOGENOM" id="CLU_016077_6_2_9"/>
<dbReference type="OrthoDB" id="9805918at2"/>
<dbReference type="Proteomes" id="UP000000543">
    <property type="component" value="Chromosome"/>
</dbReference>
<dbReference type="GO" id="GO:0005525">
    <property type="term" value="F:GTP binding"/>
    <property type="evidence" value="ECO:0007669"/>
    <property type="project" value="UniProtKB-UniRule"/>
</dbReference>
<dbReference type="GO" id="GO:0043022">
    <property type="term" value="F:ribosome binding"/>
    <property type="evidence" value="ECO:0007669"/>
    <property type="project" value="TreeGrafter"/>
</dbReference>
<dbReference type="GO" id="GO:0042254">
    <property type="term" value="P:ribosome biogenesis"/>
    <property type="evidence" value="ECO:0007669"/>
    <property type="project" value="UniProtKB-KW"/>
</dbReference>
<dbReference type="CDD" id="cd01894">
    <property type="entry name" value="EngA1"/>
    <property type="match status" value="1"/>
</dbReference>
<dbReference type="CDD" id="cd01895">
    <property type="entry name" value="EngA2"/>
    <property type="match status" value="1"/>
</dbReference>
<dbReference type="FunFam" id="3.30.300.20:FF:000004">
    <property type="entry name" value="GTPase Der"/>
    <property type="match status" value="1"/>
</dbReference>
<dbReference type="FunFam" id="3.40.50.300:FF:000040">
    <property type="entry name" value="GTPase Der"/>
    <property type="match status" value="1"/>
</dbReference>
<dbReference type="FunFam" id="3.40.50.300:FF:000057">
    <property type="entry name" value="GTPase Der"/>
    <property type="match status" value="1"/>
</dbReference>
<dbReference type="Gene3D" id="3.30.300.20">
    <property type="match status" value="1"/>
</dbReference>
<dbReference type="Gene3D" id="3.40.50.300">
    <property type="entry name" value="P-loop containing nucleotide triphosphate hydrolases"/>
    <property type="match status" value="2"/>
</dbReference>
<dbReference type="HAMAP" id="MF_00195">
    <property type="entry name" value="GTPase_Der"/>
    <property type="match status" value="1"/>
</dbReference>
<dbReference type="InterPro" id="IPR031166">
    <property type="entry name" value="G_ENGA"/>
</dbReference>
<dbReference type="InterPro" id="IPR006073">
    <property type="entry name" value="GTP-bd"/>
</dbReference>
<dbReference type="InterPro" id="IPR016484">
    <property type="entry name" value="GTPase_Der"/>
</dbReference>
<dbReference type="InterPro" id="IPR032859">
    <property type="entry name" value="KH_dom-like"/>
</dbReference>
<dbReference type="InterPro" id="IPR015946">
    <property type="entry name" value="KH_dom-like_a/b"/>
</dbReference>
<dbReference type="InterPro" id="IPR027417">
    <property type="entry name" value="P-loop_NTPase"/>
</dbReference>
<dbReference type="InterPro" id="IPR005225">
    <property type="entry name" value="Small_GTP-bd"/>
</dbReference>
<dbReference type="NCBIfam" id="TIGR03594">
    <property type="entry name" value="GTPase_EngA"/>
    <property type="match status" value="1"/>
</dbReference>
<dbReference type="NCBIfam" id="TIGR00231">
    <property type="entry name" value="small_GTP"/>
    <property type="match status" value="2"/>
</dbReference>
<dbReference type="PANTHER" id="PTHR43834">
    <property type="entry name" value="GTPASE DER"/>
    <property type="match status" value="1"/>
</dbReference>
<dbReference type="PANTHER" id="PTHR43834:SF6">
    <property type="entry name" value="GTPASE DER"/>
    <property type="match status" value="1"/>
</dbReference>
<dbReference type="Pfam" id="PF14714">
    <property type="entry name" value="KH_dom-like"/>
    <property type="match status" value="1"/>
</dbReference>
<dbReference type="Pfam" id="PF01926">
    <property type="entry name" value="MMR_HSR1"/>
    <property type="match status" value="2"/>
</dbReference>
<dbReference type="PIRSF" id="PIRSF006485">
    <property type="entry name" value="GTP-binding_EngA"/>
    <property type="match status" value="1"/>
</dbReference>
<dbReference type="PRINTS" id="PR00326">
    <property type="entry name" value="GTP1OBG"/>
</dbReference>
<dbReference type="SUPFAM" id="SSF52540">
    <property type="entry name" value="P-loop containing nucleoside triphosphate hydrolases"/>
    <property type="match status" value="2"/>
</dbReference>
<dbReference type="PROSITE" id="PS51712">
    <property type="entry name" value="G_ENGA"/>
    <property type="match status" value="2"/>
</dbReference>
<proteinExistence type="inferred from homology"/>
<protein>
    <recommendedName>
        <fullName evidence="1">GTPase Der</fullName>
    </recommendedName>
    <alternativeName>
        <fullName evidence="1">GTP-binding protein EngA</fullName>
    </alternativeName>
</protein>
<accession>Q4L6I0</accession>
<organism>
    <name type="scientific">Staphylococcus haemolyticus (strain JCSC1435)</name>
    <dbReference type="NCBI Taxonomy" id="279808"/>
    <lineage>
        <taxon>Bacteria</taxon>
        <taxon>Bacillati</taxon>
        <taxon>Bacillota</taxon>
        <taxon>Bacilli</taxon>
        <taxon>Bacillales</taxon>
        <taxon>Staphylococcaceae</taxon>
        <taxon>Staphylococcus</taxon>
    </lineage>
</organism>
<keyword id="KW-0342">GTP-binding</keyword>
<keyword id="KW-0547">Nucleotide-binding</keyword>
<keyword id="KW-0677">Repeat</keyword>
<keyword id="KW-0690">Ribosome biogenesis</keyword>
<comment type="function">
    <text evidence="1">GTPase that plays an essential role in the late steps of ribosome biogenesis.</text>
</comment>
<comment type="subunit">
    <text evidence="1">Associates with the 50S ribosomal subunit.</text>
</comment>
<comment type="similarity">
    <text evidence="1">Belongs to the TRAFAC class TrmE-Era-EngA-EngB-Septin-like GTPase superfamily. EngA (Der) GTPase family.</text>
</comment>
<reference key="1">
    <citation type="journal article" date="2005" name="J. Bacteriol.">
        <title>Whole-genome sequencing of Staphylococcus haemolyticus uncovers the extreme plasticity of its genome and the evolution of human-colonizing staphylococcal species.</title>
        <authorList>
            <person name="Takeuchi F."/>
            <person name="Watanabe S."/>
            <person name="Baba T."/>
            <person name="Yuzawa H."/>
            <person name="Ito T."/>
            <person name="Morimoto Y."/>
            <person name="Kuroda M."/>
            <person name="Cui L."/>
            <person name="Takahashi M."/>
            <person name="Ankai A."/>
            <person name="Baba S."/>
            <person name="Fukui S."/>
            <person name="Lee J.C."/>
            <person name="Hiramatsu K."/>
        </authorList>
    </citation>
    <scope>NUCLEOTIDE SEQUENCE [LARGE SCALE GENOMIC DNA]</scope>
    <source>
        <strain>JCSC1435</strain>
    </source>
</reference>
<feature type="chain" id="PRO_1000011749" description="GTPase Der">
    <location>
        <begin position="1"/>
        <end position="436"/>
    </location>
</feature>
<feature type="domain" description="EngA-type G 1">
    <location>
        <begin position="4"/>
        <end position="167"/>
    </location>
</feature>
<feature type="domain" description="EngA-type G 2">
    <location>
        <begin position="176"/>
        <end position="351"/>
    </location>
</feature>
<feature type="domain" description="KH-like" evidence="1">
    <location>
        <begin position="352"/>
        <end position="436"/>
    </location>
</feature>
<feature type="binding site" evidence="1">
    <location>
        <begin position="10"/>
        <end position="17"/>
    </location>
    <ligand>
        <name>GTP</name>
        <dbReference type="ChEBI" id="CHEBI:37565"/>
        <label>1</label>
    </ligand>
</feature>
<feature type="binding site" evidence="1">
    <location>
        <begin position="57"/>
        <end position="61"/>
    </location>
    <ligand>
        <name>GTP</name>
        <dbReference type="ChEBI" id="CHEBI:37565"/>
        <label>1</label>
    </ligand>
</feature>
<feature type="binding site" evidence="1">
    <location>
        <begin position="119"/>
        <end position="122"/>
    </location>
    <ligand>
        <name>GTP</name>
        <dbReference type="ChEBI" id="CHEBI:37565"/>
        <label>1</label>
    </ligand>
</feature>
<feature type="binding site" evidence="1">
    <location>
        <begin position="182"/>
        <end position="189"/>
    </location>
    <ligand>
        <name>GTP</name>
        <dbReference type="ChEBI" id="CHEBI:37565"/>
        <label>2</label>
    </ligand>
</feature>
<feature type="binding site" evidence="1">
    <location>
        <begin position="229"/>
        <end position="233"/>
    </location>
    <ligand>
        <name>GTP</name>
        <dbReference type="ChEBI" id="CHEBI:37565"/>
        <label>2</label>
    </ligand>
</feature>
<feature type="binding site" evidence="1">
    <location>
        <begin position="294"/>
        <end position="297"/>
    </location>
    <ligand>
        <name>GTP</name>
        <dbReference type="ChEBI" id="CHEBI:37565"/>
        <label>2</label>
    </ligand>
</feature>
<name>DER_STAHJ</name>